<comment type="function">
    <text evidence="1">Involved in unsaturated fatty acids biosynthesis. Catalyzes the dehydration of short chain beta-hydroxyacyl-ACPs and long chain saturated and unsaturated beta-hydroxyacyl-ACPs.</text>
</comment>
<comment type="catalytic activity">
    <reaction evidence="1">
        <text>a (3R)-hydroxyacyl-[ACP] = a (2E)-enoyl-[ACP] + H2O</text>
        <dbReference type="Rhea" id="RHEA:13097"/>
        <dbReference type="Rhea" id="RHEA-COMP:9925"/>
        <dbReference type="Rhea" id="RHEA-COMP:9945"/>
        <dbReference type="ChEBI" id="CHEBI:15377"/>
        <dbReference type="ChEBI" id="CHEBI:78784"/>
        <dbReference type="ChEBI" id="CHEBI:78827"/>
        <dbReference type="EC" id="4.2.1.59"/>
    </reaction>
</comment>
<comment type="subcellular location">
    <subcellularLocation>
        <location evidence="1">Cytoplasm</location>
    </subcellularLocation>
</comment>
<comment type="similarity">
    <text evidence="1">Belongs to the thioester dehydratase family. FabZ subfamily.</text>
</comment>
<name>FABZ_EHRCJ</name>
<reference key="1">
    <citation type="journal article" date="2006" name="J. Bacteriol.">
        <title>The genome of the obligately intracellular bacterium Ehrlichia canis reveals themes of complex membrane structure and immune evasion strategies.</title>
        <authorList>
            <person name="Mavromatis K."/>
            <person name="Doyle C.K."/>
            <person name="Lykidis A."/>
            <person name="Ivanova N."/>
            <person name="Francino M.P."/>
            <person name="Chain P."/>
            <person name="Shin M."/>
            <person name="Malfatti S."/>
            <person name="Larimer F."/>
            <person name="Copeland A."/>
            <person name="Detter J.C."/>
            <person name="Land M."/>
            <person name="Richardson P.M."/>
            <person name="Yu X.J."/>
            <person name="Walker D.H."/>
            <person name="McBride J.W."/>
            <person name="Kyrpides N.C."/>
        </authorList>
    </citation>
    <scope>NUCLEOTIDE SEQUENCE [LARGE SCALE GENOMIC DNA]</scope>
    <source>
        <strain>Jake</strain>
    </source>
</reference>
<organism>
    <name type="scientific">Ehrlichia canis (strain Jake)</name>
    <dbReference type="NCBI Taxonomy" id="269484"/>
    <lineage>
        <taxon>Bacteria</taxon>
        <taxon>Pseudomonadati</taxon>
        <taxon>Pseudomonadota</taxon>
        <taxon>Alphaproteobacteria</taxon>
        <taxon>Rickettsiales</taxon>
        <taxon>Anaplasmataceae</taxon>
        <taxon>Ehrlichia</taxon>
    </lineage>
</organism>
<feature type="chain" id="PRO_0000230813" description="3-hydroxyacyl-[acyl-carrier-protein] dehydratase FabZ">
    <location>
        <begin position="1"/>
        <end position="148"/>
    </location>
</feature>
<feature type="active site" evidence="1">
    <location>
        <position position="49"/>
    </location>
</feature>
<sequence length="148" mass="16629">MQFNIQEIIKMIPHSYPFLLIDKVIACTPNESTIAVKNVTFNEPFFIGHFPGNPIMPGVLIVEAMAQACMICVISNDQGQNTQDYSVYFMSIELAKFRKPVIPGDTLIIEVNVTHKRNNTCKFQCHAQVENTLVAEAQILAMIKQNEA</sequence>
<evidence type="ECO:0000255" key="1">
    <source>
        <dbReference type="HAMAP-Rule" id="MF_00406"/>
    </source>
</evidence>
<accession>Q3YQV9</accession>
<protein>
    <recommendedName>
        <fullName evidence="1">3-hydroxyacyl-[acyl-carrier-protein] dehydratase FabZ</fullName>
        <ecNumber evidence="1">4.2.1.59</ecNumber>
    </recommendedName>
    <alternativeName>
        <fullName evidence="1">(3R)-hydroxymyristoyl-[acyl-carrier-protein] dehydratase</fullName>
        <shortName evidence="1">(3R)-hydroxymyristoyl-ACP dehydrase</shortName>
    </alternativeName>
    <alternativeName>
        <fullName evidence="1">Beta-hydroxyacyl-ACP dehydratase</fullName>
    </alternativeName>
</protein>
<keyword id="KW-0963">Cytoplasm</keyword>
<keyword id="KW-0441">Lipid A biosynthesis</keyword>
<keyword id="KW-0444">Lipid biosynthesis</keyword>
<keyword id="KW-0443">Lipid metabolism</keyword>
<keyword id="KW-0456">Lyase</keyword>
<dbReference type="EC" id="4.2.1.59" evidence="1"/>
<dbReference type="EMBL" id="CP000107">
    <property type="protein sequence ID" value="AAZ68896.1"/>
    <property type="molecule type" value="Genomic_DNA"/>
</dbReference>
<dbReference type="RefSeq" id="WP_011304973.1">
    <property type="nucleotide sequence ID" value="NC_007354.1"/>
</dbReference>
<dbReference type="SMR" id="Q3YQV9"/>
<dbReference type="FunCoup" id="Q3YQV9">
    <property type="interactions" value="282"/>
</dbReference>
<dbReference type="STRING" id="269484.Ecaj_0865"/>
<dbReference type="KEGG" id="ecn:Ecaj_0865"/>
<dbReference type="eggNOG" id="COG0764">
    <property type="taxonomic scope" value="Bacteria"/>
</dbReference>
<dbReference type="HOGENOM" id="CLU_078912_1_2_5"/>
<dbReference type="InParanoid" id="Q3YQV9"/>
<dbReference type="Proteomes" id="UP000000435">
    <property type="component" value="Chromosome"/>
</dbReference>
<dbReference type="GO" id="GO:0005737">
    <property type="term" value="C:cytoplasm"/>
    <property type="evidence" value="ECO:0007669"/>
    <property type="project" value="UniProtKB-SubCell"/>
</dbReference>
<dbReference type="GO" id="GO:0016020">
    <property type="term" value="C:membrane"/>
    <property type="evidence" value="ECO:0007669"/>
    <property type="project" value="GOC"/>
</dbReference>
<dbReference type="GO" id="GO:0019171">
    <property type="term" value="F:(3R)-hydroxyacyl-[acyl-carrier-protein] dehydratase activity"/>
    <property type="evidence" value="ECO:0007669"/>
    <property type="project" value="UniProtKB-EC"/>
</dbReference>
<dbReference type="GO" id="GO:0006633">
    <property type="term" value="P:fatty acid biosynthetic process"/>
    <property type="evidence" value="ECO:0007669"/>
    <property type="project" value="UniProtKB-UniRule"/>
</dbReference>
<dbReference type="GO" id="GO:0009245">
    <property type="term" value="P:lipid A biosynthetic process"/>
    <property type="evidence" value="ECO:0007669"/>
    <property type="project" value="UniProtKB-UniRule"/>
</dbReference>
<dbReference type="CDD" id="cd01288">
    <property type="entry name" value="FabZ"/>
    <property type="match status" value="1"/>
</dbReference>
<dbReference type="FunFam" id="3.10.129.10:FF:000001">
    <property type="entry name" value="3-hydroxyacyl-[acyl-carrier-protein] dehydratase FabZ"/>
    <property type="match status" value="1"/>
</dbReference>
<dbReference type="Gene3D" id="3.10.129.10">
    <property type="entry name" value="Hotdog Thioesterase"/>
    <property type="match status" value="1"/>
</dbReference>
<dbReference type="HAMAP" id="MF_00406">
    <property type="entry name" value="FabZ"/>
    <property type="match status" value="1"/>
</dbReference>
<dbReference type="InterPro" id="IPR013114">
    <property type="entry name" value="FabA_FabZ"/>
</dbReference>
<dbReference type="InterPro" id="IPR010084">
    <property type="entry name" value="FabZ"/>
</dbReference>
<dbReference type="InterPro" id="IPR029069">
    <property type="entry name" value="HotDog_dom_sf"/>
</dbReference>
<dbReference type="NCBIfam" id="TIGR01750">
    <property type="entry name" value="fabZ"/>
    <property type="match status" value="1"/>
</dbReference>
<dbReference type="NCBIfam" id="NF000582">
    <property type="entry name" value="PRK00006.1"/>
    <property type="match status" value="1"/>
</dbReference>
<dbReference type="PANTHER" id="PTHR30272">
    <property type="entry name" value="3-HYDROXYACYL-[ACYL-CARRIER-PROTEIN] DEHYDRATASE"/>
    <property type="match status" value="1"/>
</dbReference>
<dbReference type="PANTHER" id="PTHR30272:SF1">
    <property type="entry name" value="3-HYDROXYACYL-[ACYL-CARRIER-PROTEIN] DEHYDRATASE"/>
    <property type="match status" value="1"/>
</dbReference>
<dbReference type="Pfam" id="PF07977">
    <property type="entry name" value="FabA"/>
    <property type="match status" value="1"/>
</dbReference>
<dbReference type="SUPFAM" id="SSF54637">
    <property type="entry name" value="Thioesterase/thiol ester dehydrase-isomerase"/>
    <property type="match status" value="1"/>
</dbReference>
<gene>
    <name evidence="1" type="primary">fabZ</name>
    <name type="ordered locus">Ecaj_0865</name>
</gene>
<proteinExistence type="inferred from homology"/>